<reference key="1">
    <citation type="journal article" date="1984" name="Nucleic Acids Res.">
        <title>Sequence and arrangement of the genes for cytochrome b, URF1, URF4L, URF4, URF5, URF6 and five tRNAs in Drosophila mitochondrial DNA.</title>
        <authorList>
            <person name="Clary D.O."/>
            <person name="Wahleithner J.A."/>
            <person name="Wolstenholme D.R."/>
        </authorList>
    </citation>
    <scope>NUCLEOTIDE SEQUENCE [GENOMIC DNA]</scope>
</reference>
<reference key="2">
    <citation type="journal article" date="1985" name="J. Mol. Evol.">
        <title>The mitochondrial DNA molecular of Drosophila yakuba: nucleotide sequence, gene organization, and genetic code.</title>
        <authorList>
            <person name="Clary D.O."/>
            <person name="Wolstenholme D.R."/>
        </authorList>
    </citation>
    <scope>NUCLEOTIDE SEQUENCE [LARGE SCALE GENOMIC DNA]</scope>
    <source>
        <strain>2317.6 Ivory Coast</strain>
    </source>
</reference>
<reference key="3">
    <citation type="journal article" date="1984" name="Nucleic Acids Res.">
        <title>A cluster of six tRNA genes in Drosophila mitochondrial DNA that includes a gene for an unusual tRNAserAGY.</title>
        <authorList>
            <person name="Clary D.O."/>
            <person name="Wolstenholme D.R."/>
        </authorList>
    </citation>
    <scope>NUCLEOTIDE SEQUENCE [GENOMIC DNA] OF 304-573</scope>
</reference>
<accession>P07706</accession>
<proteinExistence type="inferred from homology"/>
<sequence length="573" mass="65104">MCSISFINLISISLTCFLLSLYYLLNNMVYFIEWEVVSLNSMSIVMTFLFDWMSLLFMSFVLMIASLVIFYSKEYMESDENINRFIMLVLMFVLSMMLLIISPNLVSILLGWDGLGLVSYCLVIYFQNIKSYNAGMLTALSNRIGDVALLLAIAWMLNYGSWNYIFYLEVMQNEFSMLMIGSLVMLAAMTKSAQIPFSSWLPAAMAAPTPVSALVHSSTLVTAGVYLLIRFNIVLSTSWLGQLLLLLSGLTMFMAGLGANFEFDLKKIIALSTLSQLGLMMSILSMGFYKLAMFHLLTHALFKALLFMCAGAIIHNMNNSQDIRLMGGLSIHMPLTSACFNVSNLALCGMPFLAGFYSKDMILEIVSISNINMFSFFLYFFSTGLTVSYSFRLVYYSMTGDLNCGSLNMLNDESWVMLRGMLGLLFMSIIGGSMLNWLIFPFPYMICLPGYLKMLTLFVCIVGGLFGYLISISNLYSLNKSLLNYNLTLFLGSMWFMPYISTYGMIFYPLNYGQLVVKSFDQGWSEYFGGQHLYYKLSNYSKTLFLMHNNSLKIYLMLFVFWIMILFSFLLFL</sequence>
<name>NU5M_DROYA</name>
<gene>
    <name type="primary">mt:ND5</name>
    <name type="synonym">ND5</name>
</gene>
<dbReference type="EC" id="7.1.1.2"/>
<dbReference type="EMBL" id="X00432">
    <property type="protein sequence ID" value="CAA25131.1"/>
    <property type="molecule type" value="Genomic_DNA"/>
</dbReference>
<dbReference type="EMBL" id="X03240">
    <property type="protein sequence ID" value="CAA26992.1"/>
    <property type="molecule type" value="Genomic_DNA"/>
</dbReference>
<dbReference type="PIR" id="H25797">
    <property type="entry name" value="H25797"/>
</dbReference>
<dbReference type="RefSeq" id="NP_006909.1">
    <property type="nucleotide sequence ID" value="NC_001322.1"/>
</dbReference>
<dbReference type="SMR" id="P07706"/>
<dbReference type="EnsemblMetazoa" id="GeneID_807625_df_mr">
    <property type="protein sequence ID" value="NP_006909.1"/>
    <property type="gene ID" value="GeneID_807625"/>
</dbReference>
<dbReference type="GeneID" id="807625"/>
<dbReference type="KEGG" id="dya:ND5"/>
<dbReference type="CTD" id="4540"/>
<dbReference type="OrthoDB" id="10069788at2759"/>
<dbReference type="ChiTaRS" id="ND5">
    <property type="organism name" value="fly"/>
</dbReference>
<dbReference type="Proteomes" id="UP000002282">
    <property type="component" value="Mitochondrion"/>
</dbReference>
<dbReference type="GO" id="GO:0005743">
    <property type="term" value="C:mitochondrial inner membrane"/>
    <property type="evidence" value="ECO:0007669"/>
    <property type="project" value="UniProtKB-SubCell"/>
</dbReference>
<dbReference type="GO" id="GO:0045271">
    <property type="term" value="C:respiratory chain complex I"/>
    <property type="evidence" value="ECO:0007669"/>
    <property type="project" value="EnsemblMetazoa"/>
</dbReference>
<dbReference type="GO" id="GO:0008137">
    <property type="term" value="F:NADH dehydrogenase (ubiquinone) activity"/>
    <property type="evidence" value="ECO:0007669"/>
    <property type="project" value="UniProtKB-EC"/>
</dbReference>
<dbReference type="GO" id="GO:0042773">
    <property type="term" value="P:ATP synthesis coupled electron transport"/>
    <property type="evidence" value="ECO:0007669"/>
    <property type="project" value="InterPro"/>
</dbReference>
<dbReference type="GO" id="GO:0015990">
    <property type="term" value="P:electron transport coupled proton transport"/>
    <property type="evidence" value="ECO:0007669"/>
    <property type="project" value="TreeGrafter"/>
</dbReference>
<dbReference type="InterPro" id="IPR010934">
    <property type="entry name" value="NADH_DH_su5_C"/>
</dbReference>
<dbReference type="InterPro" id="IPR001750">
    <property type="entry name" value="ND/Mrp_TM"/>
</dbReference>
<dbReference type="InterPro" id="IPR003945">
    <property type="entry name" value="NU5C-like"/>
</dbReference>
<dbReference type="InterPro" id="IPR001516">
    <property type="entry name" value="Proton_antipo_N"/>
</dbReference>
<dbReference type="PANTHER" id="PTHR42829">
    <property type="entry name" value="NADH-UBIQUINONE OXIDOREDUCTASE CHAIN 5"/>
    <property type="match status" value="1"/>
</dbReference>
<dbReference type="PANTHER" id="PTHR42829:SF2">
    <property type="entry name" value="NADH-UBIQUINONE OXIDOREDUCTASE CHAIN 5"/>
    <property type="match status" value="1"/>
</dbReference>
<dbReference type="Pfam" id="PF06455">
    <property type="entry name" value="NADH5_C"/>
    <property type="match status" value="1"/>
</dbReference>
<dbReference type="Pfam" id="PF00361">
    <property type="entry name" value="Proton_antipo_M"/>
    <property type="match status" value="1"/>
</dbReference>
<dbReference type="Pfam" id="PF00662">
    <property type="entry name" value="Proton_antipo_N"/>
    <property type="match status" value="1"/>
</dbReference>
<dbReference type="PRINTS" id="PR01434">
    <property type="entry name" value="NADHDHGNASE5"/>
</dbReference>
<dbReference type="PRINTS" id="PR01435">
    <property type="entry name" value="NPOXDRDTASE5"/>
</dbReference>
<protein>
    <recommendedName>
        <fullName>NADH-ubiquinone oxidoreductase chain 5</fullName>
        <ecNumber>7.1.1.2</ecNumber>
    </recommendedName>
    <alternativeName>
        <fullName>NADH dehydrogenase subunit 5</fullName>
    </alternativeName>
</protein>
<keyword id="KW-0249">Electron transport</keyword>
<keyword id="KW-0472">Membrane</keyword>
<keyword id="KW-0496">Mitochondrion</keyword>
<keyword id="KW-0999">Mitochondrion inner membrane</keyword>
<keyword id="KW-0520">NAD</keyword>
<keyword id="KW-0679">Respiratory chain</keyword>
<keyword id="KW-1278">Translocase</keyword>
<keyword id="KW-0812">Transmembrane</keyword>
<keyword id="KW-1133">Transmembrane helix</keyword>
<keyword id="KW-0813">Transport</keyword>
<keyword id="KW-0830">Ubiquinone</keyword>
<organism>
    <name type="scientific">Drosophila yakuba</name>
    <name type="common">Fruit fly</name>
    <dbReference type="NCBI Taxonomy" id="7245"/>
    <lineage>
        <taxon>Eukaryota</taxon>
        <taxon>Metazoa</taxon>
        <taxon>Ecdysozoa</taxon>
        <taxon>Arthropoda</taxon>
        <taxon>Hexapoda</taxon>
        <taxon>Insecta</taxon>
        <taxon>Pterygota</taxon>
        <taxon>Neoptera</taxon>
        <taxon>Endopterygota</taxon>
        <taxon>Diptera</taxon>
        <taxon>Brachycera</taxon>
        <taxon>Muscomorpha</taxon>
        <taxon>Ephydroidea</taxon>
        <taxon>Drosophilidae</taxon>
        <taxon>Drosophila</taxon>
        <taxon>Sophophora</taxon>
    </lineage>
</organism>
<evidence type="ECO:0000250" key="1"/>
<evidence type="ECO:0000255" key="2"/>
<evidence type="ECO:0000305" key="3"/>
<geneLocation type="mitochondrion"/>
<feature type="chain" id="PRO_0000118091" description="NADH-ubiquinone oxidoreductase chain 5">
    <location>
        <begin position="1"/>
        <end position="573"/>
    </location>
</feature>
<feature type="transmembrane region" description="Helical" evidence="2">
    <location>
        <begin position="4"/>
        <end position="24"/>
    </location>
</feature>
<feature type="transmembrane region" description="Helical" evidence="2">
    <location>
        <begin position="44"/>
        <end position="64"/>
    </location>
</feature>
<feature type="transmembrane region" description="Helical" evidence="2">
    <location>
        <begin position="85"/>
        <end position="105"/>
    </location>
</feature>
<feature type="transmembrane region" description="Helical" evidence="2">
    <location>
        <begin position="106"/>
        <end position="126"/>
    </location>
</feature>
<feature type="transmembrane region" description="Helical" evidence="2">
    <location>
        <begin position="147"/>
        <end position="167"/>
    </location>
</feature>
<feature type="transmembrane region" description="Helical" evidence="2">
    <location>
        <begin position="170"/>
        <end position="190"/>
    </location>
</feature>
<feature type="transmembrane region" description="Helical" evidence="2">
    <location>
        <begin position="212"/>
        <end position="234"/>
    </location>
</feature>
<feature type="transmembrane region" description="Helical" evidence="2">
    <location>
        <begin position="239"/>
        <end position="259"/>
    </location>
</feature>
<feature type="transmembrane region" description="Helical" evidence="2">
    <location>
        <begin position="268"/>
        <end position="288"/>
    </location>
</feature>
<feature type="transmembrane region" description="Helical" evidence="2">
    <location>
        <begin position="294"/>
        <end position="314"/>
    </location>
</feature>
<feature type="transmembrane region" description="Helical" evidence="2">
    <location>
        <begin position="337"/>
        <end position="357"/>
    </location>
</feature>
<feature type="transmembrane region" description="Helical" evidence="2">
    <location>
        <begin position="377"/>
        <end position="396"/>
    </location>
</feature>
<feature type="transmembrane region" description="Helical" evidence="2">
    <location>
        <begin position="422"/>
        <end position="442"/>
    </location>
</feature>
<feature type="transmembrane region" description="Helical" evidence="2">
    <location>
        <begin position="452"/>
        <end position="472"/>
    </location>
</feature>
<feature type="transmembrane region" description="Helical" evidence="2">
    <location>
        <begin position="487"/>
        <end position="507"/>
    </location>
</feature>
<feature type="transmembrane region" description="Helical" evidence="2">
    <location>
        <begin position="552"/>
        <end position="572"/>
    </location>
</feature>
<comment type="function">
    <text evidence="1">Core subunit of the mitochondrial membrane respiratory chain NADH dehydrogenase (Complex I) that is believed to belong to the minimal assembly required for catalysis. Complex I functions in the transfer of electrons from NADH to the respiratory chain. The immediate electron acceptor for the enzyme is believed to be ubiquinone (By similarity).</text>
</comment>
<comment type="catalytic activity">
    <reaction>
        <text>a ubiquinone + NADH + 5 H(+)(in) = a ubiquinol + NAD(+) + 4 H(+)(out)</text>
        <dbReference type="Rhea" id="RHEA:29091"/>
        <dbReference type="Rhea" id="RHEA-COMP:9565"/>
        <dbReference type="Rhea" id="RHEA-COMP:9566"/>
        <dbReference type="ChEBI" id="CHEBI:15378"/>
        <dbReference type="ChEBI" id="CHEBI:16389"/>
        <dbReference type="ChEBI" id="CHEBI:17976"/>
        <dbReference type="ChEBI" id="CHEBI:57540"/>
        <dbReference type="ChEBI" id="CHEBI:57945"/>
        <dbReference type="EC" id="7.1.1.2"/>
    </reaction>
</comment>
<comment type="subcellular location">
    <subcellularLocation>
        <location evidence="1">Mitochondrion inner membrane</location>
        <topology evidence="1">Multi-pass membrane protein</topology>
    </subcellularLocation>
</comment>
<comment type="similarity">
    <text evidence="3">Belongs to the complex I subunit 5 family.</text>
</comment>